<comment type="subcellular location">
    <subcellularLocation>
        <location>Secreted</location>
    </subcellularLocation>
</comment>
<comment type="domain">
    <text>Avian ovomucoid consists of three homologous, tandem Kazal family inhibitory domains.</text>
</comment>
<sequence length="54" mass="5852">FATVDCSDHPKPVCSLEYMPLCGSDSKTYSNKCDFCNAVVESNGTLTLSHFGKC</sequence>
<keyword id="KW-0903">Direct protein sequencing</keyword>
<keyword id="KW-1015">Disulfide bond</keyword>
<keyword id="KW-0325">Glycoprotein</keyword>
<keyword id="KW-0646">Protease inhibitor</keyword>
<keyword id="KW-0677">Repeat</keyword>
<keyword id="KW-0964">Secreted</keyword>
<keyword id="KW-0722">Serine protease inhibitor</keyword>
<accession>P67942</accession>
<accession>P05558</accession>
<organism>
    <name type="scientific">Rhea americana</name>
    <name type="common">Greater rhea</name>
    <name type="synonym">Common rhea</name>
    <dbReference type="NCBI Taxonomy" id="8797"/>
    <lineage>
        <taxon>Eukaryota</taxon>
        <taxon>Metazoa</taxon>
        <taxon>Chordata</taxon>
        <taxon>Craniata</taxon>
        <taxon>Vertebrata</taxon>
        <taxon>Euteleostomi</taxon>
        <taxon>Archelosauria</taxon>
        <taxon>Archosauria</taxon>
        <taxon>Dinosauria</taxon>
        <taxon>Saurischia</taxon>
        <taxon>Theropoda</taxon>
        <taxon>Coelurosauria</taxon>
        <taxon>Aves</taxon>
        <taxon>Palaeognathae</taxon>
        <taxon>Rheiformes</taxon>
        <taxon>Rheidae</taxon>
        <taxon>Rhea</taxon>
    </lineage>
</organism>
<dbReference type="PIR" id="I31444">
    <property type="entry name" value="I31444"/>
</dbReference>
<dbReference type="SMR" id="P67942"/>
<dbReference type="GO" id="GO:0005576">
    <property type="term" value="C:extracellular region"/>
    <property type="evidence" value="ECO:0007669"/>
    <property type="project" value="UniProtKB-SubCell"/>
</dbReference>
<dbReference type="GO" id="GO:0004867">
    <property type="term" value="F:serine-type endopeptidase inhibitor activity"/>
    <property type="evidence" value="ECO:0007669"/>
    <property type="project" value="UniProtKB-KW"/>
</dbReference>
<dbReference type="CDD" id="cd00104">
    <property type="entry name" value="KAZAL_FS"/>
    <property type="match status" value="1"/>
</dbReference>
<dbReference type="FunFam" id="3.30.60.30:FF:000037">
    <property type="entry name" value="Ovomucoid"/>
    <property type="match status" value="1"/>
</dbReference>
<dbReference type="Gene3D" id="3.30.60.30">
    <property type="match status" value="1"/>
</dbReference>
<dbReference type="InterPro" id="IPR051597">
    <property type="entry name" value="Bifunctional_prot_inhibitor"/>
</dbReference>
<dbReference type="InterPro" id="IPR002350">
    <property type="entry name" value="Kazal_dom"/>
</dbReference>
<dbReference type="InterPro" id="IPR036058">
    <property type="entry name" value="Kazal_dom_sf"/>
</dbReference>
<dbReference type="InterPro" id="IPR001239">
    <property type="entry name" value="Prot_inh_Kazal-m"/>
</dbReference>
<dbReference type="PANTHER" id="PTHR47729:SF1">
    <property type="entry name" value="OVOMUCOID-LIKE-RELATED"/>
    <property type="match status" value="1"/>
</dbReference>
<dbReference type="PANTHER" id="PTHR47729">
    <property type="entry name" value="SERINE PEPTIDASE INHIBITOR, KAZAL TYPE 2, TANDEM DUPLICATE 1-RELATED"/>
    <property type="match status" value="1"/>
</dbReference>
<dbReference type="Pfam" id="PF00050">
    <property type="entry name" value="Kazal_1"/>
    <property type="match status" value="1"/>
</dbReference>
<dbReference type="PRINTS" id="PR00290">
    <property type="entry name" value="KAZALINHBTR"/>
</dbReference>
<dbReference type="SMART" id="SM00280">
    <property type="entry name" value="KAZAL"/>
    <property type="match status" value="1"/>
</dbReference>
<dbReference type="SUPFAM" id="SSF100895">
    <property type="entry name" value="Kazal-type serine protease inhibitors"/>
    <property type="match status" value="1"/>
</dbReference>
<dbReference type="PROSITE" id="PS00282">
    <property type="entry name" value="KAZAL_1"/>
    <property type="match status" value="1"/>
</dbReference>
<dbReference type="PROSITE" id="PS51465">
    <property type="entry name" value="KAZAL_2"/>
    <property type="match status" value="1"/>
</dbReference>
<feature type="chain" id="PRO_0000073173" description="Ovomucoid">
    <location>
        <begin position="1" status="less than"/>
        <end position="54" status="greater than"/>
    </location>
</feature>
<feature type="domain" description="Kazal-like" evidence="1">
    <location>
        <begin position="4"/>
        <end position="54"/>
    </location>
</feature>
<feature type="site" description="Reactive bond 3">
    <location>
        <begin position="16"/>
        <end position="17"/>
    </location>
</feature>
<feature type="glycosylation site" description="N-linked (GlcNAc...) asparagine">
    <location>
        <position position="43"/>
    </location>
</feature>
<feature type="disulfide bond">
    <location>
        <begin position="6"/>
        <end position="36"/>
    </location>
</feature>
<feature type="disulfide bond">
    <location>
        <begin position="14"/>
        <end position="33"/>
    </location>
</feature>
<feature type="disulfide bond">
    <location>
        <begin position="22"/>
        <end position="54"/>
    </location>
</feature>
<feature type="non-terminal residue">
    <location>
        <position position="1"/>
    </location>
</feature>
<feature type="non-terminal residue">
    <location>
        <position position="54"/>
    </location>
</feature>
<proteinExistence type="evidence at protein level"/>
<evidence type="ECO:0000255" key="1">
    <source>
        <dbReference type="PROSITE-ProRule" id="PRU00798"/>
    </source>
</evidence>
<reference key="1">
    <citation type="journal article" date="1987" name="Biochemistry">
        <title>Ovomucoid third domains from 100 avian species: isolation, sequences, and hypervariability of enzyme-inhibitor contact residues.</title>
        <authorList>
            <person name="Laskowski M. Jr."/>
            <person name="Kato I."/>
            <person name="Ardelt W."/>
            <person name="Cook J."/>
            <person name="Denton A."/>
            <person name="Empie M.W."/>
            <person name="Kohr W.J."/>
            <person name="Park S.J."/>
            <person name="Parks K."/>
            <person name="Schatzley B.L."/>
            <person name="Schoenberger O.L."/>
            <person name="Tashiro M."/>
            <person name="Vichot G."/>
            <person name="Whatley H.E."/>
            <person name="Wieczorek A."/>
            <person name="Wieczorek M."/>
        </authorList>
    </citation>
    <scope>PROTEIN SEQUENCE</scope>
</reference>
<name>IOVO_RHEAM</name>
<protein>
    <recommendedName>
        <fullName>Ovomucoid</fullName>
    </recommendedName>
</protein>